<protein>
    <recommendedName>
        <fullName>Casparian strip membrane protein 4</fullName>
        <shortName>LjCASP4</shortName>
    </recommendedName>
</protein>
<proteinExistence type="evidence at transcript level"/>
<evidence type="ECO:0000250" key="1"/>
<evidence type="ECO:0000255" key="2"/>
<evidence type="ECO:0000305" key="3"/>
<keyword id="KW-1003">Cell membrane</keyword>
<keyword id="KW-0961">Cell wall biogenesis/degradation</keyword>
<keyword id="KW-0472">Membrane</keyword>
<keyword id="KW-0812">Transmembrane</keyword>
<keyword id="KW-1133">Transmembrane helix</keyword>
<organism>
    <name type="scientific">Lotus japonicus</name>
    <name type="common">Lotus corniculatus var. japonicus</name>
    <dbReference type="NCBI Taxonomy" id="34305"/>
    <lineage>
        <taxon>Eukaryota</taxon>
        <taxon>Viridiplantae</taxon>
        <taxon>Streptophyta</taxon>
        <taxon>Embryophyta</taxon>
        <taxon>Tracheophyta</taxon>
        <taxon>Spermatophyta</taxon>
        <taxon>Magnoliopsida</taxon>
        <taxon>eudicotyledons</taxon>
        <taxon>Gunneridae</taxon>
        <taxon>Pentapetalae</taxon>
        <taxon>rosids</taxon>
        <taxon>fabids</taxon>
        <taxon>Fabales</taxon>
        <taxon>Fabaceae</taxon>
        <taxon>Papilionoideae</taxon>
        <taxon>50 kb inversion clade</taxon>
        <taxon>NPAAA clade</taxon>
        <taxon>Hologalegina</taxon>
        <taxon>robinioid clade</taxon>
        <taxon>Loteae</taxon>
        <taxon>Lotus</taxon>
    </lineage>
</organism>
<sequence>MMSSTTIDVPAESSNVAKGKAVLVAAPRPGGWKKGIAIVDFVLRLGAVAAALGAATTMATADQTLPFFTQFFQFEASYDSFTTFQFFVITMALVGCYLVLSLPLSIVSIIRPHALGPKLFLIILDTVFLTLATASAASAAAVVYVAHNGNQDSNWLAICNQFGDFCAQTSGAVVSSLVAVVVFVLLIVMSALALGKH</sequence>
<comment type="function">
    <text evidence="1">Regulates membrane-cell wall junctions and localized cell wall deposition. Required for establishment of the Casparian strip membrane domain (CSD) and the subsequent formation of Casparian strips, a cell wall modification of the root endodermis that determines an apoplastic barrier between the intraorganismal apoplasm and the extraorganismal apoplasm and prevents lateral diffusion (By similarity).</text>
</comment>
<comment type="subunit">
    <text evidence="1">Homodimer and heterodimers.</text>
</comment>
<comment type="subcellular location">
    <subcellularLocation>
        <location evidence="1">Cell membrane</location>
        <topology evidence="1">Multi-pass membrane protein</topology>
    </subcellularLocation>
    <text evidence="1">Very restricted localization following a belt shape within the plasma membrane which coincides with the position of the Casparian strip membrane domain in the root endodermis.</text>
</comment>
<comment type="similarity">
    <text evidence="3">Belongs to the Casparian strip membrane proteins (CASP) family.</text>
</comment>
<accession>P0DI55</accession>
<accession>I3S5U6</accession>
<dbReference type="EMBL" id="FS340270">
    <property type="status" value="NOT_ANNOTATED_CDS"/>
    <property type="molecule type" value="mRNA"/>
</dbReference>
<dbReference type="EMBL" id="BT135843">
    <property type="protein sequence ID" value="AFK35638.1"/>
    <property type="molecule type" value="mRNA"/>
</dbReference>
<dbReference type="SMR" id="P0DI55"/>
<dbReference type="GO" id="GO:0005886">
    <property type="term" value="C:plasma membrane"/>
    <property type="evidence" value="ECO:0007669"/>
    <property type="project" value="UniProtKB-SubCell"/>
</dbReference>
<dbReference type="GO" id="GO:0071555">
    <property type="term" value="P:cell wall organization"/>
    <property type="evidence" value="ECO:0007669"/>
    <property type="project" value="UniProtKB-KW"/>
</dbReference>
<dbReference type="InterPro" id="IPR006459">
    <property type="entry name" value="CASP/CASPL"/>
</dbReference>
<dbReference type="InterPro" id="IPR006702">
    <property type="entry name" value="CASP_dom"/>
</dbReference>
<dbReference type="InterPro" id="IPR044173">
    <property type="entry name" value="CASPL"/>
</dbReference>
<dbReference type="NCBIfam" id="TIGR01569">
    <property type="entry name" value="A_tha_TIGR01569"/>
    <property type="match status" value="1"/>
</dbReference>
<dbReference type="PANTHER" id="PTHR36488:SF11">
    <property type="entry name" value="CASP-LIKE PROTEIN"/>
    <property type="match status" value="1"/>
</dbReference>
<dbReference type="PANTHER" id="PTHR36488">
    <property type="entry name" value="CASP-LIKE PROTEIN 1U1"/>
    <property type="match status" value="1"/>
</dbReference>
<dbReference type="Pfam" id="PF04535">
    <property type="entry name" value="CASP_dom"/>
    <property type="match status" value="1"/>
</dbReference>
<reference key="1">
    <citation type="submission" date="2009-05" db="EMBL/GenBank/DDBJ databases">
        <title>Database of expressed sequence tags from a legume, Lotus japonicus.</title>
        <authorList>
            <person name="Sakurai N."/>
            <person name="Sakai Y."/>
            <person name="Yano K."/>
            <person name="Nishida H."/>
            <person name="Asami Y."/>
            <person name="Hiruta A."/>
            <person name="Suzuki H."/>
            <person name="Shibata D."/>
        </authorList>
    </citation>
    <scope>NUCLEOTIDE SEQUENCE [LARGE SCALE MRNA]</scope>
</reference>
<reference key="2">
    <citation type="submission" date="2012-05" db="EMBL/GenBank/DDBJ databases">
        <authorList>
            <person name="Krishnakumar V."/>
            <person name="Cheung F."/>
            <person name="Xiao Y."/>
            <person name="Chan A."/>
            <person name="Moskal W.A."/>
            <person name="Town C.D."/>
        </authorList>
    </citation>
    <scope>NUCLEOTIDE SEQUENCE [LARGE SCALE MRNA]</scope>
</reference>
<reference key="3">
    <citation type="journal article" date="2014" name="Plant Physiol.">
        <title>Functional and evolutionary analysis of the CASPARIAN STRIP MEMBRANE DOMAIN PROTEIN family.</title>
        <authorList>
            <person name="Roppolo D."/>
            <person name="Boeckmann B."/>
            <person name="Pfister A."/>
            <person name="Boutet E."/>
            <person name="Rubio M.C."/>
            <person name="Denervaud-Tendon V."/>
            <person name="Vermeer J.E."/>
            <person name="Gheyselinck J."/>
            <person name="Xenarios I."/>
            <person name="Geldner N."/>
        </authorList>
    </citation>
    <scope>GENE FAMILY</scope>
    <scope>NOMENCLATURE</scope>
</reference>
<name>CASP4_LOTJA</name>
<feature type="chain" id="PRO_0000417774" description="Casparian strip membrane protein 4">
    <location>
        <begin position="1"/>
        <end position="197"/>
    </location>
</feature>
<feature type="topological domain" description="Cytoplasmic" evidence="2">
    <location>
        <begin position="1"/>
        <end position="34"/>
    </location>
</feature>
<feature type="transmembrane region" description="Helical" evidence="2">
    <location>
        <begin position="35"/>
        <end position="55"/>
    </location>
</feature>
<feature type="topological domain" description="Extracellular" evidence="2">
    <location>
        <begin position="56"/>
        <end position="85"/>
    </location>
</feature>
<feature type="transmembrane region" description="Helical" evidence="2">
    <location>
        <begin position="86"/>
        <end position="106"/>
    </location>
</feature>
<feature type="topological domain" description="Cytoplasmic" evidence="2">
    <location>
        <begin position="107"/>
        <end position="118"/>
    </location>
</feature>
<feature type="transmembrane region" description="Helical" evidence="2">
    <location>
        <begin position="119"/>
        <end position="139"/>
    </location>
</feature>
<feature type="topological domain" description="Extracellular" evidence="2">
    <location>
        <begin position="140"/>
        <end position="171"/>
    </location>
</feature>
<feature type="transmembrane region" description="Helical" evidence="2">
    <location>
        <begin position="172"/>
        <end position="192"/>
    </location>
</feature>
<feature type="topological domain" description="Cytoplasmic" evidence="2">
    <location>
        <begin position="193"/>
        <end position="197"/>
    </location>
</feature>
<feature type="sequence conflict" description="In Ref. 2; AFK35638." evidence="3" ref="2">
    <original>C</original>
    <variation>G</variation>
    <location>
        <position position="96"/>
    </location>
</feature>
<feature type="sequence conflict" description="In Ref. 2; AFK35638." evidence="3" ref="2">
    <original>G</original>
    <variation>A</variation>
    <location>
        <position position="163"/>
    </location>
</feature>